<keyword id="KW-0997">Cell inner membrane</keyword>
<keyword id="KW-1003">Cell membrane</keyword>
<keyword id="KW-0472">Membrane</keyword>
<keyword id="KW-0812">Transmembrane</keyword>
<keyword id="KW-1133">Transmembrane helix</keyword>
<dbReference type="EMBL" id="CP000247">
    <property type="protein sequence ID" value="ABG70165.1"/>
    <property type="molecule type" value="Genomic_DNA"/>
</dbReference>
<dbReference type="RefSeq" id="WP_001216963.1">
    <property type="nucleotide sequence ID" value="NC_008253.1"/>
</dbReference>
<dbReference type="KEGG" id="ecp:ECP_2166"/>
<dbReference type="HOGENOM" id="CLU_220259_0_0_6"/>
<dbReference type="Proteomes" id="UP000009182">
    <property type="component" value="Chromosome"/>
</dbReference>
<dbReference type="GO" id="GO:0005886">
    <property type="term" value="C:plasma membrane"/>
    <property type="evidence" value="ECO:0007669"/>
    <property type="project" value="UniProtKB-SubCell"/>
</dbReference>
<dbReference type="HAMAP" id="MF_01362">
    <property type="entry name" value="UPF0387"/>
    <property type="match status" value="1"/>
</dbReference>
<dbReference type="InterPro" id="IPR020870">
    <property type="entry name" value="UPF0387_membrane"/>
</dbReference>
<dbReference type="NCBIfam" id="NF010225">
    <property type="entry name" value="PRK13681.1"/>
    <property type="match status" value="1"/>
</dbReference>
<reference key="1">
    <citation type="journal article" date="2006" name="Mol. Microbiol.">
        <title>Role of pathogenicity island-associated integrases in the genome plasticity of uropathogenic Escherichia coli strain 536.</title>
        <authorList>
            <person name="Hochhut B."/>
            <person name="Wilde C."/>
            <person name="Balling G."/>
            <person name="Middendorf B."/>
            <person name="Dobrindt U."/>
            <person name="Brzuszkiewicz E."/>
            <person name="Gottschalk G."/>
            <person name="Carniel E."/>
            <person name="Hacker J."/>
        </authorList>
    </citation>
    <scope>NUCLEOTIDE SEQUENCE [LARGE SCALE GENOMIC DNA]</scope>
    <source>
        <strain>536 / UPEC</strain>
    </source>
</reference>
<accession>Q0TFW4</accession>
<comment type="subcellular location">
    <subcellularLocation>
        <location evidence="1">Cell inner membrane</location>
        <topology evidence="1">Single-pass membrane protein</topology>
    </subcellularLocation>
</comment>
<comment type="similarity">
    <text evidence="1">Belongs to the UPF0387 family.</text>
</comment>
<gene>
    <name evidence="1" type="primary">yohO</name>
    <name type="ordered locus">ECP_2166</name>
</gene>
<name>YOHO_ECOL5</name>
<feature type="chain" id="PRO_0000270497" description="UPF0387 membrane protein YohO">
    <location>
        <begin position="1"/>
        <end position="35"/>
    </location>
</feature>
<feature type="transmembrane region" description="Helical" evidence="1">
    <location>
        <begin position="6"/>
        <end position="26"/>
    </location>
</feature>
<evidence type="ECO:0000255" key="1">
    <source>
        <dbReference type="HAMAP-Rule" id="MF_01362"/>
    </source>
</evidence>
<protein>
    <recommendedName>
        <fullName evidence="1">UPF0387 membrane protein YohO</fullName>
    </recommendedName>
</protein>
<proteinExistence type="inferred from homology"/>
<sequence>MRIAKIGVIALFLFMALGGIGGVMLAGYTFILRAG</sequence>
<organism>
    <name type="scientific">Escherichia coli O6:K15:H31 (strain 536 / UPEC)</name>
    <dbReference type="NCBI Taxonomy" id="362663"/>
    <lineage>
        <taxon>Bacteria</taxon>
        <taxon>Pseudomonadati</taxon>
        <taxon>Pseudomonadota</taxon>
        <taxon>Gammaproteobacteria</taxon>
        <taxon>Enterobacterales</taxon>
        <taxon>Enterobacteriaceae</taxon>
        <taxon>Escherichia</taxon>
    </lineage>
</organism>